<keyword id="KW-0963">Cytoplasm</keyword>
<keyword id="KW-0694">RNA-binding</keyword>
<reference key="1">
    <citation type="journal article" date="2003" name="Mol. Microbiol.">
        <title>Genome-based analysis of virulence genes in a non-biofilm-forming Staphylococcus epidermidis strain (ATCC 12228).</title>
        <authorList>
            <person name="Zhang Y.-Q."/>
            <person name="Ren S.-X."/>
            <person name="Li H.-L."/>
            <person name="Wang Y.-X."/>
            <person name="Fu G."/>
            <person name="Yang J."/>
            <person name="Qin Z.-Q."/>
            <person name="Miao Y.-G."/>
            <person name="Wang W.-Y."/>
            <person name="Chen R.-S."/>
            <person name="Shen Y."/>
            <person name="Chen Z."/>
            <person name="Yuan Z.-H."/>
            <person name="Zhao G.-P."/>
            <person name="Qu D."/>
            <person name="Danchin A."/>
            <person name="Wen Y.-M."/>
        </authorList>
    </citation>
    <scope>NUCLEOTIDE SEQUENCE [LARGE SCALE GENOMIC DNA]</scope>
    <source>
        <strain>ATCC 12228 / FDA PCI 1200</strain>
    </source>
</reference>
<dbReference type="EMBL" id="AE015929">
    <property type="protein sequence ID" value="AAO04163.1"/>
    <property type="molecule type" value="Genomic_DNA"/>
</dbReference>
<dbReference type="RefSeq" id="NP_764121.1">
    <property type="nucleotide sequence ID" value="NC_004461.1"/>
</dbReference>
<dbReference type="RefSeq" id="WP_001829588.1">
    <property type="nucleotide sequence ID" value="NZ_WBME01000030.1"/>
</dbReference>
<dbReference type="SMR" id="Q8CPX9"/>
<dbReference type="GeneID" id="50019286"/>
<dbReference type="KEGG" id="sep:SE_0566"/>
<dbReference type="PATRIC" id="fig|176280.10.peg.537"/>
<dbReference type="eggNOG" id="COG0691">
    <property type="taxonomic scope" value="Bacteria"/>
</dbReference>
<dbReference type="HOGENOM" id="CLU_108953_0_0_9"/>
<dbReference type="OrthoDB" id="9805462at2"/>
<dbReference type="Proteomes" id="UP000001411">
    <property type="component" value="Chromosome"/>
</dbReference>
<dbReference type="GO" id="GO:0005829">
    <property type="term" value="C:cytosol"/>
    <property type="evidence" value="ECO:0007669"/>
    <property type="project" value="TreeGrafter"/>
</dbReference>
<dbReference type="GO" id="GO:0003723">
    <property type="term" value="F:RNA binding"/>
    <property type="evidence" value="ECO:0007669"/>
    <property type="project" value="UniProtKB-UniRule"/>
</dbReference>
<dbReference type="GO" id="GO:0070929">
    <property type="term" value="P:trans-translation"/>
    <property type="evidence" value="ECO:0007669"/>
    <property type="project" value="UniProtKB-UniRule"/>
</dbReference>
<dbReference type="CDD" id="cd09294">
    <property type="entry name" value="SmpB"/>
    <property type="match status" value="1"/>
</dbReference>
<dbReference type="Gene3D" id="2.40.280.10">
    <property type="match status" value="1"/>
</dbReference>
<dbReference type="HAMAP" id="MF_00023">
    <property type="entry name" value="SmpB"/>
    <property type="match status" value="1"/>
</dbReference>
<dbReference type="InterPro" id="IPR023620">
    <property type="entry name" value="SmpB"/>
</dbReference>
<dbReference type="InterPro" id="IPR000037">
    <property type="entry name" value="SsrA-bd_prot"/>
</dbReference>
<dbReference type="InterPro" id="IPR020081">
    <property type="entry name" value="SsrA-bd_prot_CS"/>
</dbReference>
<dbReference type="NCBIfam" id="NF003843">
    <property type="entry name" value="PRK05422.1"/>
    <property type="match status" value="1"/>
</dbReference>
<dbReference type="NCBIfam" id="TIGR00086">
    <property type="entry name" value="smpB"/>
    <property type="match status" value="1"/>
</dbReference>
<dbReference type="PANTHER" id="PTHR30308:SF2">
    <property type="entry name" value="SSRA-BINDING PROTEIN"/>
    <property type="match status" value="1"/>
</dbReference>
<dbReference type="PANTHER" id="PTHR30308">
    <property type="entry name" value="TMRNA-BINDING COMPONENT OF TRANS-TRANSLATION TAGGING COMPLEX"/>
    <property type="match status" value="1"/>
</dbReference>
<dbReference type="Pfam" id="PF01668">
    <property type="entry name" value="SmpB"/>
    <property type="match status" value="1"/>
</dbReference>
<dbReference type="SUPFAM" id="SSF74982">
    <property type="entry name" value="Small protein B (SmpB)"/>
    <property type="match status" value="1"/>
</dbReference>
<dbReference type="PROSITE" id="PS01317">
    <property type="entry name" value="SSRP"/>
    <property type="match status" value="1"/>
</dbReference>
<proteinExistence type="inferred from homology"/>
<accession>Q8CPX9</accession>
<gene>
    <name evidence="1" type="primary">smpB</name>
    <name type="ordered locus">SE_0566</name>
</gene>
<evidence type="ECO:0000255" key="1">
    <source>
        <dbReference type="HAMAP-Rule" id="MF_00023"/>
    </source>
</evidence>
<sequence length="156" mass="18055">MAKKKSKSPGTLAENRKARHDYNIEDTIEAGIALRGTEIKSIRRGSANLKDSFAQVRRGEMYLNNMHIAPYEEGNRFNHDPLRTRKLLLHKKEIQKLGERTREIGYSIIPLKLYLKHGQCKVLLGVARGKKKYDKRQALKEKAVKRDIDRAVKARY</sequence>
<organism>
    <name type="scientific">Staphylococcus epidermidis (strain ATCC 12228 / FDA PCI 1200)</name>
    <dbReference type="NCBI Taxonomy" id="176280"/>
    <lineage>
        <taxon>Bacteria</taxon>
        <taxon>Bacillati</taxon>
        <taxon>Bacillota</taxon>
        <taxon>Bacilli</taxon>
        <taxon>Bacillales</taxon>
        <taxon>Staphylococcaceae</taxon>
        <taxon>Staphylococcus</taxon>
    </lineage>
</organism>
<protein>
    <recommendedName>
        <fullName evidence="1">SsrA-binding protein</fullName>
    </recommendedName>
    <alternativeName>
        <fullName evidence="1">Small protein B</fullName>
    </alternativeName>
</protein>
<feature type="chain" id="PRO_0000103034" description="SsrA-binding protein">
    <location>
        <begin position="1"/>
        <end position="156"/>
    </location>
</feature>
<name>SSRP_STAES</name>
<comment type="function">
    <text evidence="1">Required for rescue of stalled ribosomes mediated by trans-translation. Binds to transfer-messenger RNA (tmRNA), required for stable association of tmRNA with ribosomes. tmRNA and SmpB together mimic tRNA shape, replacing the anticodon stem-loop with SmpB. tmRNA is encoded by the ssrA gene; the 2 termini fold to resemble tRNA(Ala) and it encodes a 'tag peptide', a short internal open reading frame. During trans-translation Ala-aminoacylated tmRNA acts like a tRNA, entering the A-site of stalled ribosomes, displacing the stalled mRNA. The ribosome then switches to translate the ORF on the tmRNA; the nascent peptide is terminated with the 'tag peptide' encoded by the tmRNA and targeted for degradation. The ribosome is freed to recommence translation, which seems to be the essential function of trans-translation.</text>
</comment>
<comment type="subcellular location">
    <subcellularLocation>
        <location evidence="1">Cytoplasm</location>
    </subcellularLocation>
    <text evidence="1">The tmRNA-SmpB complex associates with stalled 70S ribosomes.</text>
</comment>
<comment type="similarity">
    <text evidence="1">Belongs to the SmpB family.</text>
</comment>